<keyword id="KW-0012">Acyltransferase</keyword>
<keyword id="KW-0963">Cytoplasm</keyword>
<keyword id="KW-0536">Nodulation</keyword>
<keyword id="KW-0808">Transferase</keyword>
<dbReference type="EC" id="2.3.1.-" evidence="1"/>
<dbReference type="EMBL" id="AJ302679">
    <property type="protein sequence ID" value="CAC80542.1"/>
    <property type="molecule type" value="Genomic_DNA"/>
</dbReference>
<dbReference type="SMR" id="Q8VVF0"/>
<dbReference type="GO" id="GO:0005829">
    <property type="term" value="C:cytosol"/>
    <property type="evidence" value="ECO:0007669"/>
    <property type="project" value="InterPro"/>
</dbReference>
<dbReference type="GO" id="GO:0016746">
    <property type="term" value="F:acyltransferase activity"/>
    <property type="evidence" value="ECO:0007669"/>
    <property type="project" value="UniProtKB-UniRule"/>
</dbReference>
<dbReference type="Gene3D" id="3.40.630.30">
    <property type="match status" value="1"/>
</dbReference>
<dbReference type="HAMAP" id="MF_00084">
    <property type="entry name" value="NodA"/>
    <property type="match status" value="1"/>
</dbReference>
<dbReference type="InterPro" id="IPR003484">
    <property type="entry name" value="NodA"/>
</dbReference>
<dbReference type="InterPro" id="IPR020567">
    <property type="entry name" value="Nodulation_prot_NodA_CS"/>
</dbReference>
<dbReference type="NCBIfam" id="TIGR04245">
    <property type="entry name" value="nodulat_NodA"/>
    <property type="match status" value="1"/>
</dbReference>
<dbReference type="NCBIfam" id="NF001974">
    <property type="entry name" value="PRK00756.1"/>
    <property type="match status" value="1"/>
</dbReference>
<dbReference type="Pfam" id="PF02474">
    <property type="entry name" value="NodA"/>
    <property type="match status" value="1"/>
</dbReference>
<dbReference type="PROSITE" id="PS01349">
    <property type="entry name" value="NODA"/>
    <property type="match status" value="1"/>
</dbReference>
<name>NODA_SINTE</name>
<gene>
    <name evidence="1" type="primary">nodA</name>
</gene>
<evidence type="ECO:0000255" key="1">
    <source>
        <dbReference type="HAMAP-Rule" id="MF_00084"/>
    </source>
</evidence>
<proteinExistence type="inferred from homology"/>
<organism>
    <name type="scientific">Sinorhizobium terangae</name>
    <dbReference type="NCBI Taxonomy" id="110322"/>
    <lineage>
        <taxon>Bacteria</taxon>
        <taxon>Pseudomonadati</taxon>
        <taxon>Pseudomonadota</taxon>
        <taxon>Alphaproteobacteria</taxon>
        <taxon>Hyphomicrobiales</taxon>
        <taxon>Rhizobiaceae</taxon>
        <taxon>Sinorhizobium/Ensifer group</taxon>
        <taxon>Sinorhizobium</taxon>
    </lineage>
</organism>
<sequence>MCSRVRWTLRWESELQLDDHVELASFFRKTYGPTGAFNAKPFEGSRSWAGARPELRAIAYDSNGVAAHMGLLRRFIKVGEVDLLVAELGLYGVRPDLEGLGISHSLRVMYPVLQQLRVPFGFGAVRHALQKHVERFGRHVPANVLSGIRVRSTLPDARLDLPPTRIEDVLVVVFPVELAMSDWPTATFIDRNGPEL</sequence>
<reference key="1">
    <citation type="submission" date="2000-11" db="EMBL/GenBank/DDBJ databases">
        <title>Symbiotic and taxonomic diversity of Acacia tortilis rhizobia.</title>
        <authorList>
            <person name="Ba S."/>
            <person name="Willems A."/>
            <person name="Lorquin J."/>
            <person name="Roche P."/>
            <person name="de Lajudie P."/>
            <person name="Neyra M."/>
            <person name="Moulin L."/>
            <person name="Gillis M."/>
            <person name="Dreyfus B."/>
            <person name="Boivin-Masson C."/>
        </authorList>
    </citation>
    <scope>NUCLEOTIDE SEQUENCE [GENOMIC DNA]</scope>
    <source>
        <strain>LMG 15317 / ORS 1244</strain>
    </source>
</reference>
<comment type="function">
    <text evidence="1">N-acyltransferase required for nodulation. Acts in the production of a small, heat-stable compound (Nod) that stimulates mitosis in various plant protoplasts.</text>
</comment>
<comment type="subcellular location">
    <subcellularLocation>
        <location evidence="1">Cytoplasm</location>
    </subcellularLocation>
</comment>
<comment type="similarity">
    <text evidence="1">Belongs to the NodA family.</text>
</comment>
<protein>
    <recommendedName>
        <fullName evidence="1">Nodulation protein A</fullName>
        <ecNumber evidence="1">2.3.1.-</ecNumber>
    </recommendedName>
</protein>
<accession>Q8VVF0</accession>
<feature type="chain" id="PRO_0000196346" description="Nodulation protein A">
    <location>
        <begin position="1"/>
        <end position="196"/>
    </location>
</feature>